<comment type="subcellular location">
    <subcellularLocation>
        <location evidence="1">Cytoplasm</location>
    </subcellularLocation>
</comment>
<comment type="miscellaneous">
    <text evidence="2">Present with 1600 molecules/cell in log phase SD medium.</text>
</comment>
<comment type="similarity">
    <text evidence="3">Belongs to the PhyH family.</text>
</comment>
<accession>P47181</accession>
<accession>D6VWX3</accession>
<accession>Q6Q5N2</accession>
<gene>
    <name type="ordered locus">YJR154W</name>
    <name type="ORF">J2240</name>
</gene>
<proteinExistence type="evidence at protein level"/>
<organism>
    <name type="scientific">Saccharomyces cerevisiae (strain ATCC 204508 / S288c)</name>
    <name type="common">Baker's yeast</name>
    <dbReference type="NCBI Taxonomy" id="559292"/>
    <lineage>
        <taxon>Eukaryota</taxon>
        <taxon>Fungi</taxon>
        <taxon>Dikarya</taxon>
        <taxon>Ascomycota</taxon>
        <taxon>Saccharomycotina</taxon>
        <taxon>Saccharomycetes</taxon>
        <taxon>Saccharomycetales</taxon>
        <taxon>Saccharomycetaceae</taxon>
        <taxon>Saccharomyces</taxon>
    </lineage>
</organism>
<evidence type="ECO:0000269" key="1">
    <source>
    </source>
</evidence>
<evidence type="ECO:0000269" key="2">
    <source>
    </source>
</evidence>
<evidence type="ECO:0000305" key="3"/>
<keyword id="KW-0963">Cytoplasm</keyword>
<keyword id="KW-1185">Reference proteome</keyword>
<protein>
    <recommendedName>
        <fullName>Uncharacterized protein YJR154W</fullName>
    </recommendedName>
</protein>
<dbReference type="EMBL" id="Z49654">
    <property type="protein sequence ID" value="CAA89687.1"/>
    <property type="molecule type" value="Genomic_DNA"/>
</dbReference>
<dbReference type="EMBL" id="AY557917">
    <property type="protein sequence ID" value="AAS56243.1"/>
    <property type="molecule type" value="Genomic_DNA"/>
</dbReference>
<dbReference type="EMBL" id="BK006943">
    <property type="protein sequence ID" value="DAA08939.1"/>
    <property type="molecule type" value="Genomic_DNA"/>
</dbReference>
<dbReference type="PIR" id="S57183">
    <property type="entry name" value="S57183"/>
</dbReference>
<dbReference type="RefSeq" id="NP_012688.1">
    <property type="nucleotide sequence ID" value="NM_001181812.1"/>
</dbReference>
<dbReference type="SMR" id="P47181"/>
<dbReference type="BioGRID" id="33909">
    <property type="interactions" value="26"/>
</dbReference>
<dbReference type="DIP" id="DIP-7736N"/>
<dbReference type="FunCoup" id="P47181">
    <property type="interactions" value="45"/>
</dbReference>
<dbReference type="MINT" id="P47181"/>
<dbReference type="STRING" id="4932.YJR154W"/>
<dbReference type="iPTMnet" id="P47181"/>
<dbReference type="PaxDb" id="4932-YJR154W"/>
<dbReference type="PeptideAtlas" id="P47181"/>
<dbReference type="EnsemblFungi" id="YJR154W_mRNA">
    <property type="protein sequence ID" value="YJR154W"/>
    <property type="gene ID" value="YJR154W"/>
</dbReference>
<dbReference type="GeneID" id="853619"/>
<dbReference type="KEGG" id="sce:YJR154W"/>
<dbReference type="AGR" id="SGD:S000003915"/>
<dbReference type="SGD" id="S000003915">
    <property type="gene designation" value="YJR154W"/>
</dbReference>
<dbReference type="VEuPathDB" id="FungiDB:YJR154W"/>
<dbReference type="eggNOG" id="ENOG502RUKM">
    <property type="taxonomic scope" value="Eukaryota"/>
</dbReference>
<dbReference type="HOGENOM" id="CLU_047725_0_1_1"/>
<dbReference type="InParanoid" id="P47181"/>
<dbReference type="OMA" id="PYVHSCT"/>
<dbReference type="OrthoDB" id="445007at2759"/>
<dbReference type="BioCyc" id="YEAST:G3O-31766-MONOMER"/>
<dbReference type="Reactome" id="R-SCE-389599">
    <property type="pathway name" value="Alpha-oxidation of phytanate"/>
</dbReference>
<dbReference type="Reactome" id="R-SCE-9033241">
    <property type="pathway name" value="Peroxisomal protein import"/>
</dbReference>
<dbReference type="BioGRID-ORCS" id="853619">
    <property type="hits" value="0 hits in 10 CRISPR screens"/>
</dbReference>
<dbReference type="PRO" id="PR:P47181"/>
<dbReference type="Proteomes" id="UP000002311">
    <property type="component" value="Chromosome X"/>
</dbReference>
<dbReference type="RNAct" id="P47181">
    <property type="molecule type" value="protein"/>
</dbReference>
<dbReference type="GO" id="GO:0005737">
    <property type="term" value="C:cytoplasm"/>
    <property type="evidence" value="ECO:0007005"/>
    <property type="project" value="SGD"/>
</dbReference>
<dbReference type="GO" id="GO:0048244">
    <property type="term" value="F:phytanoyl-CoA dioxygenase activity"/>
    <property type="evidence" value="ECO:0007669"/>
    <property type="project" value="InterPro"/>
</dbReference>
<dbReference type="GO" id="GO:0001561">
    <property type="term" value="P:fatty acid alpha-oxidation"/>
    <property type="evidence" value="ECO:0007669"/>
    <property type="project" value="InterPro"/>
</dbReference>
<dbReference type="Gene3D" id="2.60.120.620">
    <property type="entry name" value="q2cbj1_9rhob like domain"/>
    <property type="match status" value="1"/>
</dbReference>
<dbReference type="InterPro" id="IPR047128">
    <property type="entry name" value="PhyH"/>
</dbReference>
<dbReference type="InterPro" id="IPR008775">
    <property type="entry name" value="Phytyl_CoA_dOase-like"/>
</dbReference>
<dbReference type="PANTHER" id="PTHR21308">
    <property type="entry name" value="PHYTANOYL-COA ALPHA-HYDROXYLASE"/>
    <property type="match status" value="1"/>
</dbReference>
<dbReference type="PANTHER" id="PTHR21308:SF1">
    <property type="entry name" value="PHYTANOYL-COA DIOXYGENASE, PEROXISOMAL"/>
    <property type="match status" value="1"/>
</dbReference>
<dbReference type="Pfam" id="PF05721">
    <property type="entry name" value="PhyH"/>
    <property type="match status" value="1"/>
</dbReference>
<dbReference type="SUPFAM" id="SSF51197">
    <property type="entry name" value="Clavaminate synthase-like"/>
    <property type="match status" value="1"/>
</dbReference>
<name>YJ9S_YEAST</name>
<feature type="chain" id="PRO_0000215232" description="Uncharacterized protein YJR154W">
    <location>
        <begin position="1"/>
        <end position="346"/>
    </location>
</feature>
<feature type="sequence conflict" description="In Ref. 3; AAS56243." evidence="3" ref="3">
    <original>G</original>
    <variation>R</variation>
    <location>
        <position position="300"/>
    </location>
</feature>
<sequence length="346" mass="38972">MNTDSHNLSEPYNIGGQKYINMKKKEDLGVCQPGLTQKAFTVEDKFDYKAIIEKMEVYGLCVVKNFIETSRCDEILKEIEPHFYRYESWQGSPFPKETTVATRSVLHSSTVLKDVVCDRMFCDISKHFLNEENYFAAGKVINKCTSDIQLNSGIVYKVGAGASDQGYHREDIVHHTTHQACERFQYGTETMVGLGVAFTDMNKENGSTRMIVGSHLWGPHDSCGNFDKRMEFHVNVAKGDAVLFLGSLYHAASANRTSQDRVAGYFFMTKSYLKPEENLHLGTDLRVFKGLPLEALQLLGLGISEPFCGHIDYKSPGHLISSSLFENDIEKGYYGETIRVNYGSTQ</sequence>
<reference key="1">
    <citation type="journal article" date="1996" name="EMBO J.">
        <title>Complete nucleotide sequence of Saccharomyces cerevisiae chromosome X.</title>
        <authorList>
            <person name="Galibert F."/>
            <person name="Alexandraki D."/>
            <person name="Baur A."/>
            <person name="Boles E."/>
            <person name="Chalwatzis N."/>
            <person name="Chuat J.-C."/>
            <person name="Coster F."/>
            <person name="Cziepluch C."/>
            <person name="de Haan M."/>
            <person name="Domdey H."/>
            <person name="Durand P."/>
            <person name="Entian K.-D."/>
            <person name="Gatius M."/>
            <person name="Goffeau A."/>
            <person name="Grivell L.A."/>
            <person name="Hennemann A."/>
            <person name="Herbert C.J."/>
            <person name="Heumann K."/>
            <person name="Hilger F."/>
            <person name="Hollenberg C.P."/>
            <person name="Huang M.-E."/>
            <person name="Jacq C."/>
            <person name="Jauniaux J.-C."/>
            <person name="Katsoulou C."/>
            <person name="Kirchrath L."/>
            <person name="Kleine K."/>
            <person name="Kordes E."/>
            <person name="Koetter P."/>
            <person name="Liebl S."/>
            <person name="Louis E.J."/>
            <person name="Manus V."/>
            <person name="Mewes H.-W."/>
            <person name="Miosga T."/>
            <person name="Obermaier B."/>
            <person name="Perea J."/>
            <person name="Pohl T.M."/>
            <person name="Portetelle D."/>
            <person name="Pujol A."/>
            <person name="Purnelle B."/>
            <person name="Ramezani Rad M."/>
            <person name="Rasmussen S.W."/>
            <person name="Rose M."/>
            <person name="Rossau R."/>
            <person name="Schaaff-Gerstenschlaeger I."/>
            <person name="Smits P.H.M."/>
            <person name="Scarcez T."/>
            <person name="Soriano N."/>
            <person name="To Van D."/>
            <person name="Tzermia M."/>
            <person name="Van Broekhoven A."/>
            <person name="Vandenbol M."/>
            <person name="Wedler H."/>
            <person name="von Wettstein D."/>
            <person name="Wambutt R."/>
            <person name="Zagulski M."/>
            <person name="Zollner A."/>
            <person name="Karpfinger-Hartl L."/>
        </authorList>
    </citation>
    <scope>NUCLEOTIDE SEQUENCE [LARGE SCALE GENOMIC DNA]</scope>
    <source>
        <strain>ATCC 204508 / S288c</strain>
    </source>
</reference>
<reference key="2">
    <citation type="journal article" date="2014" name="G3 (Bethesda)">
        <title>The reference genome sequence of Saccharomyces cerevisiae: Then and now.</title>
        <authorList>
            <person name="Engel S.R."/>
            <person name="Dietrich F.S."/>
            <person name="Fisk D.G."/>
            <person name="Binkley G."/>
            <person name="Balakrishnan R."/>
            <person name="Costanzo M.C."/>
            <person name="Dwight S.S."/>
            <person name="Hitz B.C."/>
            <person name="Karra K."/>
            <person name="Nash R.S."/>
            <person name="Weng S."/>
            <person name="Wong E.D."/>
            <person name="Lloyd P."/>
            <person name="Skrzypek M.S."/>
            <person name="Miyasato S.R."/>
            <person name="Simison M."/>
            <person name="Cherry J.M."/>
        </authorList>
    </citation>
    <scope>GENOME REANNOTATION</scope>
    <source>
        <strain>ATCC 204508 / S288c</strain>
    </source>
</reference>
<reference key="3">
    <citation type="journal article" date="2007" name="Genome Res.">
        <title>Approaching a complete repository of sequence-verified protein-encoding clones for Saccharomyces cerevisiae.</title>
        <authorList>
            <person name="Hu Y."/>
            <person name="Rolfs A."/>
            <person name="Bhullar B."/>
            <person name="Murthy T.V.S."/>
            <person name="Zhu C."/>
            <person name="Berger M.F."/>
            <person name="Camargo A.A."/>
            <person name="Kelley F."/>
            <person name="McCarron S."/>
            <person name="Jepson D."/>
            <person name="Richardson A."/>
            <person name="Raphael J."/>
            <person name="Moreira D."/>
            <person name="Taycher E."/>
            <person name="Zuo D."/>
            <person name="Mohr S."/>
            <person name="Kane M.F."/>
            <person name="Williamson J."/>
            <person name="Simpson A.J.G."/>
            <person name="Bulyk M.L."/>
            <person name="Harlow E."/>
            <person name="Marsischky G."/>
            <person name="Kolodner R.D."/>
            <person name="LaBaer J."/>
        </authorList>
    </citation>
    <scope>NUCLEOTIDE SEQUENCE [GENOMIC DNA]</scope>
    <source>
        <strain>ATCC 204508 / S288c</strain>
    </source>
</reference>
<reference key="4">
    <citation type="journal article" date="2003" name="Nature">
        <title>Global analysis of protein localization in budding yeast.</title>
        <authorList>
            <person name="Huh W.-K."/>
            <person name="Falvo J.V."/>
            <person name="Gerke L.C."/>
            <person name="Carroll A.S."/>
            <person name="Howson R.W."/>
            <person name="Weissman J.S."/>
            <person name="O'Shea E.K."/>
        </authorList>
    </citation>
    <scope>SUBCELLULAR LOCATION [LARGE SCALE ANALYSIS]</scope>
</reference>
<reference key="5">
    <citation type="journal article" date="2003" name="Nature">
        <title>Global analysis of protein expression in yeast.</title>
        <authorList>
            <person name="Ghaemmaghami S."/>
            <person name="Huh W.-K."/>
            <person name="Bower K."/>
            <person name="Howson R.W."/>
            <person name="Belle A."/>
            <person name="Dephoure N."/>
            <person name="O'Shea E.K."/>
            <person name="Weissman J.S."/>
        </authorList>
    </citation>
    <scope>LEVEL OF PROTEIN EXPRESSION [LARGE SCALE ANALYSIS]</scope>
</reference>